<proteinExistence type="inferred from homology"/>
<feature type="chain" id="PRO_1000013382" description="Large ribosomal subunit protein bL34">
    <location>
        <begin position="1"/>
        <end position="47"/>
    </location>
</feature>
<dbReference type="EMBL" id="CP000511">
    <property type="protein sequence ID" value="ABM16830.1"/>
    <property type="molecule type" value="Genomic_DNA"/>
</dbReference>
<dbReference type="RefSeq" id="WP_003930923.1">
    <property type="nucleotide sequence ID" value="NZ_JACKSD010000290.1"/>
</dbReference>
<dbReference type="SMR" id="A1TI30"/>
<dbReference type="STRING" id="350058.Mvan_6078"/>
<dbReference type="KEGG" id="mva:Mvan_6078"/>
<dbReference type="eggNOG" id="COG0230">
    <property type="taxonomic scope" value="Bacteria"/>
</dbReference>
<dbReference type="HOGENOM" id="CLU_129938_2_1_11"/>
<dbReference type="Proteomes" id="UP000009159">
    <property type="component" value="Chromosome"/>
</dbReference>
<dbReference type="GO" id="GO:1990904">
    <property type="term" value="C:ribonucleoprotein complex"/>
    <property type="evidence" value="ECO:0007669"/>
    <property type="project" value="UniProtKB-KW"/>
</dbReference>
<dbReference type="GO" id="GO:0005840">
    <property type="term" value="C:ribosome"/>
    <property type="evidence" value="ECO:0007669"/>
    <property type="project" value="UniProtKB-KW"/>
</dbReference>
<dbReference type="GO" id="GO:0003735">
    <property type="term" value="F:structural constituent of ribosome"/>
    <property type="evidence" value="ECO:0007669"/>
    <property type="project" value="InterPro"/>
</dbReference>
<dbReference type="GO" id="GO:0006412">
    <property type="term" value="P:translation"/>
    <property type="evidence" value="ECO:0007669"/>
    <property type="project" value="UniProtKB-UniRule"/>
</dbReference>
<dbReference type="FunFam" id="1.10.287.3980:FF:000001">
    <property type="entry name" value="Mitochondrial ribosomal protein L34"/>
    <property type="match status" value="1"/>
</dbReference>
<dbReference type="Gene3D" id="1.10.287.3980">
    <property type="match status" value="1"/>
</dbReference>
<dbReference type="HAMAP" id="MF_00391">
    <property type="entry name" value="Ribosomal_bL34"/>
    <property type="match status" value="1"/>
</dbReference>
<dbReference type="InterPro" id="IPR000271">
    <property type="entry name" value="Ribosomal_bL34"/>
</dbReference>
<dbReference type="InterPro" id="IPR020939">
    <property type="entry name" value="Ribosomal_bL34_CS"/>
</dbReference>
<dbReference type="NCBIfam" id="TIGR01030">
    <property type="entry name" value="rpmH_bact"/>
    <property type="match status" value="1"/>
</dbReference>
<dbReference type="PANTHER" id="PTHR14503:SF4">
    <property type="entry name" value="LARGE RIBOSOMAL SUBUNIT PROTEIN BL34M"/>
    <property type="match status" value="1"/>
</dbReference>
<dbReference type="PANTHER" id="PTHR14503">
    <property type="entry name" value="MITOCHONDRIAL RIBOSOMAL PROTEIN 34 FAMILY MEMBER"/>
    <property type="match status" value="1"/>
</dbReference>
<dbReference type="Pfam" id="PF00468">
    <property type="entry name" value="Ribosomal_L34"/>
    <property type="match status" value="1"/>
</dbReference>
<dbReference type="PROSITE" id="PS00784">
    <property type="entry name" value="RIBOSOMAL_L34"/>
    <property type="match status" value="1"/>
</dbReference>
<sequence length="47" mass="5463">MAKGKRTFQPNNRRRAKVHGFRLRMRTRAGRAIVTARRAKGRRSLTA</sequence>
<comment type="similarity">
    <text evidence="1">Belongs to the bacterial ribosomal protein bL34 family.</text>
</comment>
<protein>
    <recommendedName>
        <fullName evidence="1">Large ribosomal subunit protein bL34</fullName>
    </recommendedName>
    <alternativeName>
        <fullName evidence="2">50S ribosomal protein L34</fullName>
    </alternativeName>
</protein>
<gene>
    <name evidence="1" type="primary">rpmH</name>
    <name type="ordered locus">Mvan_6078</name>
</gene>
<evidence type="ECO:0000255" key="1">
    <source>
        <dbReference type="HAMAP-Rule" id="MF_00391"/>
    </source>
</evidence>
<evidence type="ECO:0000305" key="2"/>
<reference key="1">
    <citation type="submission" date="2006-12" db="EMBL/GenBank/DDBJ databases">
        <title>Complete sequence of Mycobacterium vanbaalenii PYR-1.</title>
        <authorList>
            <consortium name="US DOE Joint Genome Institute"/>
            <person name="Copeland A."/>
            <person name="Lucas S."/>
            <person name="Lapidus A."/>
            <person name="Barry K."/>
            <person name="Detter J.C."/>
            <person name="Glavina del Rio T."/>
            <person name="Hammon N."/>
            <person name="Israni S."/>
            <person name="Dalin E."/>
            <person name="Tice H."/>
            <person name="Pitluck S."/>
            <person name="Singan V."/>
            <person name="Schmutz J."/>
            <person name="Larimer F."/>
            <person name="Land M."/>
            <person name="Hauser L."/>
            <person name="Kyrpides N."/>
            <person name="Anderson I.J."/>
            <person name="Miller C."/>
            <person name="Richardson P."/>
        </authorList>
    </citation>
    <scope>NUCLEOTIDE SEQUENCE [LARGE SCALE GENOMIC DNA]</scope>
    <source>
        <strain>DSM 7251 / JCM 13017 / BCRC 16820 / KCTC 9966 / NRRL B-24157 / PYR-1</strain>
    </source>
</reference>
<name>RL34_MYCVP</name>
<keyword id="KW-0687">Ribonucleoprotein</keyword>
<keyword id="KW-0689">Ribosomal protein</keyword>
<organism>
    <name type="scientific">Mycolicibacterium vanbaalenii (strain DSM 7251 / JCM 13017 / BCRC 16820 / KCTC 9966 / NRRL B-24157 / PYR-1)</name>
    <name type="common">Mycobacterium vanbaalenii</name>
    <dbReference type="NCBI Taxonomy" id="350058"/>
    <lineage>
        <taxon>Bacteria</taxon>
        <taxon>Bacillati</taxon>
        <taxon>Actinomycetota</taxon>
        <taxon>Actinomycetes</taxon>
        <taxon>Mycobacteriales</taxon>
        <taxon>Mycobacteriaceae</taxon>
        <taxon>Mycolicibacterium</taxon>
    </lineage>
</organism>
<accession>A1TI30</accession>